<evidence type="ECO:0000250" key="1">
    <source>
        <dbReference type="UniProtKB" id="P26313"/>
    </source>
</evidence>
<evidence type="ECO:0000255" key="2">
    <source>
        <dbReference type="HAMAP-Rule" id="MF_04084"/>
    </source>
</evidence>
<organism>
    <name type="scientific">Chapare mammarenavirus (isolate Human/Bolivia/810419/2003)</name>
    <dbReference type="NCBI Taxonomy" id="3052302"/>
    <lineage>
        <taxon>Viruses</taxon>
        <taxon>Riboviria</taxon>
        <taxon>Orthornavirae</taxon>
        <taxon>Negarnaviricota</taxon>
        <taxon>Polyploviricotina</taxon>
        <taxon>Ellioviricetes</taxon>
        <taxon>Bunyavirales</taxon>
        <taxon>Arenaviridae</taxon>
        <taxon>Mammarenavirus</taxon>
    </lineage>
</organism>
<dbReference type="EMBL" id="EU260463">
    <property type="protein sequence ID" value="ABY87068.1"/>
    <property type="molecule type" value="Genomic_RNA"/>
</dbReference>
<dbReference type="RefSeq" id="YP_001816782.1">
    <property type="nucleotide sequence ID" value="NC_010562.1"/>
</dbReference>
<dbReference type="SMR" id="B2C4J0"/>
<dbReference type="GlyCosmos" id="B2C4J0">
    <property type="glycosylation" value="11 sites, No reported glycans"/>
</dbReference>
<dbReference type="KEGG" id="vg:6216304"/>
<dbReference type="OrthoDB" id="4838at10239"/>
<dbReference type="Proteomes" id="UP000008449">
    <property type="component" value="Genome"/>
</dbReference>
<dbReference type="GO" id="GO:0044167">
    <property type="term" value="C:host cell endoplasmic reticulum membrane"/>
    <property type="evidence" value="ECO:0007669"/>
    <property type="project" value="UniProtKB-SubCell"/>
</dbReference>
<dbReference type="GO" id="GO:0044178">
    <property type="term" value="C:host cell Golgi membrane"/>
    <property type="evidence" value="ECO:0007669"/>
    <property type="project" value="UniProtKB-SubCell"/>
</dbReference>
<dbReference type="GO" id="GO:0020002">
    <property type="term" value="C:host cell plasma membrane"/>
    <property type="evidence" value="ECO:0007669"/>
    <property type="project" value="UniProtKB-SubCell"/>
</dbReference>
<dbReference type="GO" id="GO:0016020">
    <property type="term" value="C:membrane"/>
    <property type="evidence" value="ECO:0007669"/>
    <property type="project" value="UniProtKB-UniRule"/>
</dbReference>
<dbReference type="GO" id="GO:0019031">
    <property type="term" value="C:viral envelope"/>
    <property type="evidence" value="ECO:0007669"/>
    <property type="project" value="UniProtKB-UniRule"/>
</dbReference>
<dbReference type="GO" id="GO:0055036">
    <property type="term" value="C:virion membrane"/>
    <property type="evidence" value="ECO:0007669"/>
    <property type="project" value="UniProtKB-SubCell"/>
</dbReference>
<dbReference type="GO" id="GO:0046872">
    <property type="term" value="F:metal ion binding"/>
    <property type="evidence" value="ECO:0007669"/>
    <property type="project" value="UniProtKB-KW"/>
</dbReference>
<dbReference type="GO" id="GO:0039654">
    <property type="term" value="P:fusion of virus membrane with host endosome membrane"/>
    <property type="evidence" value="ECO:0007669"/>
    <property type="project" value="UniProtKB-UniRule"/>
</dbReference>
<dbReference type="GO" id="GO:0019065">
    <property type="term" value="P:receptor-mediated endocytosis of virus by host cell"/>
    <property type="evidence" value="ECO:0007669"/>
    <property type="project" value="UniProtKB-UniRule"/>
</dbReference>
<dbReference type="GO" id="GO:0019062">
    <property type="term" value="P:virion attachment to host cell"/>
    <property type="evidence" value="ECO:0007669"/>
    <property type="project" value="UniProtKB-UniRule"/>
</dbReference>
<dbReference type="Gene3D" id="6.10.140.1590">
    <property type="match status" value="1"/>
</dbReference>
<dbReference type="Gene3D" id="2.20.28.180">
    <property type="entry name" value="Arenavirus glycoprotein, zinc binding domain"/>
    <property type="match status" value="1"/>
</dbReference>
<dbReference type="HAMAP" id="MF_04084">
    <property type="entry name" value="ARENA_GPC"/>
    <property type="match status" value="1"/>
</dbReference>
<dbReference type="InterPro" id="IPR001535">
    <property type="entry name" value="Arena_glycoprot"/>
</dbReference>
<dbReference type="InterPro" id="IPR043015">
    <property type="entry name" value="Arena_glycoprot_zinc-bd"/>
</dbReference>
<dbReference type="Pfam" id="PF00798">
    <property type="entry name" value="Arena_glycoprot"/>
    <property type="match status" value="1"/>
</dbReference>
<dbReference type="PIRSF" id="PIRSF004028">
    <property type="entry name" value="GPC_ArenaV"/>
    <property type="match status" value="1"/>
</dbReference>
<proteinExistence type="inferred from homology"/>
<protein>
    <recommendedName>
        <fullName evidence="2">Pre-glycoprotein polyprotein GP complex</fullName>
        <shortName evidence="2">Pre-GP-C</shortName>
    </recommendedName>
    <component>
        <recommendedName>
            <fullName evidence="2">Stable signal peptide</fullName>
            <shortName evidence="2">SSP</shortName>
        </recommendedName>
    </component>
    <component>
        <recommendedName>
            <fullName evidence="2">Glycoprotein G1</fullName>
            <shortName evidence="2">GP1</shortName>
        </recommendedName>
    </component>
    <component>
        <recommendedName>
            <fullName evidence="2">Glycoprotein G2</fullName>
            <shortName evidence="2">GP2</shortName>
        </recommendedName>
    </component>
</protein>
<feature type="initiator methionine" description="Removed; by host" evidence="2">
    <location>
        <position position="1"/>
    </location>
</feature>
<feature type="chain" id="PRO_0000361580" description="Pre-glycoprotein polyprotein GP complex" evidence="2">
    <location>
        <begin position="2"/>
        <end position="484"/>
    </location>
</feature>
<feature type="chain" id="PRO_0000361581" description="Stable signal peptide" evidence="2">
    <location>
        <begin position="2"/>
        <end position="58"/>
    </location>
</feature>
<feature type="chain" id="PRO_0000361582" description="Glycoprotein G1" evidence="2">
    <location>
        <begin position="59"/>
        <end position="250"/>
    </location>
</feature>
<feature type="chain" id="PRO_0000361583" description="Glycoprotein G2" evidence="2">
    <location>
        <begin position="251"/>
        <end position="484"/>
    </location>
</feature>
<feature type="topological domain" description="Extracellular" evidence="2">
    <location>
        <begin position="2"/>
        <end position="17"/>
    </location>
</feature>
<feature type="transmembrane region" description="Helical" evidence="2">
    <location>
        <begin position="18"/>
        <end position="33"/>
    </location>
</feature>
<feature type="topological domain" description="Cytoplasmic" evidence="2">
    <location>
        <begin position="34"/>
        <end position="58"/>
    </location>
</feature>
<feature type="topological domain" description="Extracellular" evidence="2">
    <location>
        <begin position="59"/>
        <end position="423"/>
    </location>
</feature>
<feature type="transmembrane region" description="Helical" evidence="2">
    <location>
        <begin position="424"/>
        <end position="444"/>
    </location>
</feature>
<feature type="topological domain" description="Cytoplasmic" evidence="2">
    <location>
        <begin position="445"/>
        <end position="484"/>
    </location>
</feature>
<feature type="binding site" evidence="2">
    <location>
        <position position="57"/>
    </location>
    <ligand>
        <name>Zn(2+)</name>
        <dbReference type="ChEBI" id="CHEBI:29105"/>
        <label>1</label>
    </ligand>
</feature>
<feature type="binding site" evidence="2">
    <location>
        <position position="446"/>
    </location>
    <ligand>
        <name>Zn(2+)</name>
        <dbReference type="ChEBI" id="CHEBI:29105"/>
        <label>2</label>
    </ligand>
</feature>
<feature type="binding site" evidence="2">
    <location>
        <position position="448"/>
    </location>
    <ligand>
        <name>Zn(2+)</name>
        <dbReference type="ChEBI" id="CHEBI:29105"/>
        <label>2</label>
    </ligand>
</feature>
<feature type="binding site" evidence="2">
    <location>
        <position position="454"/>
    </location>
    <ligand>
        <name>Zn(2+)</name>
        <dbReference type="ChEBI" id="CHEBI:29105"/>
        <label>2</label>
    </ligand>
</feature>
<feature type="binding site" evidence="2">
    <location>
        <position position="458"/>
    </location>
    <ligand>
        <name>Zn(2+)</name>
        <dbReference type="ChEBI" id="CHEBI:29105"/>
        <label>1</label>
    </ligand>
</feature>
<feature type="binding site" evidence="2">
    <location>
        <position position="466"/>
    </location>
    <ligand>
        <name>Zn(2+)</name>
        <dbReference type="ChEBI" id="CHEBI:29105"/>
        <label>1</label>
    </ligand>
</feature>
<feature type="binding site" evidence="2">
    <location>
        <position position="468"/>
    </location>
    <ligand>
        <name>Zn(2+)</name>
        <dbReference type="ChEBI" id="CHEBI:29105"/>
        <label>1</label>
    </ligand>
</feature>
<feature type="binding site" evidence="2">
    <location>
        <position position="484"/>
    </location>
    <ligand>
        <name>Zn(2+)</name>
        <dbReference type="ChEBI" id="CHEBI:29105"/>
        <label>2</label>
    </ligand>
</feature>
<feature type="site" description="Important for GP-C-mediated membrane fusion" evidence="1">
    <location>
        <position position="33"/>
    </location>
</feature>
<feature type="site" description="Cleavage; by host signal peptidase" evidence="2">
    <location>
        <begin position="58"/>
        <end position="59"/>
    </location>
</feature>
<feature type="site" description="Cleavage; by host MBTPS1" evidence="2">
    <location>
        <begin position="250"/>
        <end position="251"/>
    </location>
</feature>
<feature type="lipid moiety-binding region" description="N-myristoyl glycine; by host" evidence="2">
    <location>
        <position position="2"/>
    </location>
</feature>
<feature type="glycosylation site" description="N-linked (GlcNAc...) asparagine; by host" evidence="2">
    <location>
        <position position="88"/>
    </location>
</feature>
<feature type="glycosylation site" description="N-linked (GlcNAc...) asparagine; by host" evidence="2">
    <location>
        <position position="125"/>
    </location>
</feature>
<feature type="glycosylation site" description="N-linked (GlcNAc...) asparagine; by host" evidence="2">
    <location>
        <position position="178"/>
    </location>
</feature>
<feature type="glycosylation site" description="N-linked (GlcNAc...) asparagine; by host" evidence="2">
    <location>
        <position position="218"/>
    </location>
</feature>
<feature type="glycosylation site" description="N-linked (GlcNAc...) asparagine; by host" evidence="2">
    <location>
        <position position="356"/>
    </location>
</feature>
<feature type="glycosylation site" description="N-linked (GlcNAc...) asparagine; by host" evidence="2">
    <location>
        <position position="364"/>
    </location>
</feature>
<feature type="glycosylation site" description="N-linked (GlcNAc...) asparagine; by host" evidence="2">
    <location>
        <position position="381"/>
    </location>
</feature>
<feature type="glycosylation site" description="N-linked (GlcNAc...) asparagine; by host" evidence="2">
    <location>
        <position position="386"/>
    </location>
</feature>
<feature type="disulfide bond" evidence="2">
    <location>
        <begin position="85"/>
        <end position="225"/>
    </location>
</feature>
<feature type="disulfide bond" evidence="2">
    <location>
        <begin position="270"/>
        <end position="283"/>
    </location>
</feature>
<feature type="disulfide bond" evidence="2">
    <location>
        <begin position="292"/>
        <end position="301"/>
    </location>
</feature>
<feature type="disulfide bond" evidence="2">
    <location>
        <begin position="355"/>
        <end position="376"/>
    </location>
</feature>
<comment type="function">
    <molecule>Stable signal peptide</molecule>
    <text evidence="2">Functions as a cleaved signal peptide that is retained as the third component of the GP complex (GP-C). Helps to stabilize the spike complex in its native conformation. The SSP is required for efficient glycoprotein expression, post-translational maturation cleavage of G1 and G2, glycoprotein transport to the cell surface plasma membrane, formation of infectious virus particles, and acid pH-dependent glycoprotein-mediated cell fusion.</text>
</comment>
<comment type="function">
    <text evidence="2">Glycoprotein G1: Forms the virion spikes together with glycoprotein G2. The glycoprotein spike trimers are connected to the underlying matrix. Interacts with the host receptor leading to virus endocytosis.</text>
</comment>
<comment type="function">
    <molecule>Glycoprotein G2</molecule>
    <text evidence="2">Forms the virion spikes together with glycoprotein G1. The glycoprotein spike trimers are connected to the underlying matrix. Class I viral fusion protein that directs fusion of viral and host endosomal membranes, leading to delivery of the nucleocapsid into the cytoplasm. Membrane fusion is mediated by irreversible conformational changes induced by acidification.</text>
</comment>
<comment type="subunit">
    <molecule>Stable signal peptide</molecule>
    <text evidence="2">Interacts with glycoprotein G2. Part of the GP complex (GP-C) together with glycoprotein G1 and glycoprotein G2. The GP-complex interacts with protein Z, which interacts with ribonucleocapsid; these interactions may induce virion budding.</text>
</comment>
<comment type="subunit">
    <molecule>Glycoprotein G1</molecule>
    <text evidence="2">Homotrimer; disulfide-linked. In pre-fusion state, G1 homotrimers bind G2 homotrimers via ionic interactions. Part of the GP complex (GP-C) together with glycoprotein G2 and the stable signal peptide. The GP-complex interacts with protein Z, which interacts with ribonucleocapsid; these interactions may induce virion budding.</text>
</comment>
<comment type="subunit">
    <molecule>Glycoprotein G2</molecule>
    <text evidence="2">Homotrimer. Interacts with the stable signal peptide. In pre-fusion state, G2 homotrimers bind G1 homotrimers via ionic interactions. Part of the GP complex (GP-C) together with glycoprotein G1 and the stable signal peptide. Acidification in the endosome triggers rearrangements, which ultimately leads to a 6 helix bundle formed by the two heptad repeat domains (HR1 and HR2) in post-fusion state. The GP-complex interacts with protein Z, which interacts with ribonucleocapsid; these interactions may induce virion budding.</text>
</comment>
<comment type="subcellular location">
    <molecule>Stable signal peptide</molecule>
    <subcellularLocation>
        <location evidence="2">Virion membrane</location>
        <topology evidence="2">Single-pass type II membrane protein</topology>
    </subcellularLocation>
    <subcellularLocation>
        <location evidence="2">Host endoplasmic reticulum membrane</location>
        <topology evidence="2">Single-pass type II membrane protein</topology>
    </subcellularLocation>
    <subcellularLocation>
        <location evidence="2">Host Golgi apparatus membrane</location>
        <topology evidence="2">Single-pass type II membrane protein</topology>
    </subcellularLocation>
    <subcellularLocation>
        <location evidence="2">Host cell membrane</location>
        <topology evidence="2">Single-pass type II membrane protein</topology>
    </subcellularLocation>
</comment>
<comment type="subcellular location">
    <molecule>Glycoprotein G1</molecule>
    <subcellularLocation>
        <location evidence="2">Virion membrane</location>
        <topology evidence="2">Peripheral membrane protein</topology>
    </subcellularLocation>
    <subcellularLocation>
        <location evidence="2">Host endoplasmic reticulum membrane</location>
        <topology evidence="2">Peripheral membrane protein</topology>
    </subcellularLocation>
    <subcellularLocation>
        <location evidence="2">Host Golgi apparatus membrane</location>
        <topology evidence="2">Peripheral membrane protein</topology>
    </subcellularLocation>
    <subcellularLocation>
        <location evidence="2">Host cell membrane</location>
        <topology evidence="2">Peripheral membrane protein</topology>
    </subcellularLocation>
</comment>
<comment type="subcellular location">
    <molecule>Glycoprotein G2</molecule>
    <subcellularLocation>
        <location evidence="2">Virion membrane</location>
        <topology evidence="2">Single-pass membrane protein</topology>
    </subcellularLocation>
    <subcellularLocation>
        <location evidence="2">Host endoplasmic reticulum membrane</location>
        <topology evidence="2">Single-pass membrane protein</topology>
    </subcellularLocation>
    <subcellularLocation>
        <location evidence="2">Host Golgi apparatus membrane</location>
        <topology evidence="2">Single-pass membrane protein</topology>
    </subcellularLocation>
    <subcellularLocation>
        <location evidence="2">Host cell membrane</location>
        <topology evidence="2">Single-pass membrane protein</topology>
    </subcellularLocation>
    <text evidence="2">Binding to the stable signal peptide masks endogenous ER localization signals in the cytoplasmic domain of G2 to ensure that only the fully assembled, tripartite GP complex is transported for virion assembly.</text>
</comment>
<comment type="domain">
    <molecule>Stable signal peptide</molecule>
    <text evidence="2">The N-terminus is localized at the extracellular side of the GP-C, with a part embedded in the membrane probably.</text>
</comment>
<comment type="domain">
    <molecule>Glycoprotein G2</molecule>
    <text evidence="2">Contains 1 fusion peptide at the N-terminus, 2 heptad repeats domains HR1 and HR2 and, at the C-terminus, a cytoplasmic domain that plays a role in ER location. Also contains a zinc-binding domain that allows SSP retention in the GPC complex by accepting a cysteine from SSP as the fourth ligand.</text>
</comment>
<comment type="PTM">
    <molecule>Pre-glycoprotein polyprotein GP complex</molecule>
    <text evidence="2">Specific enzymatic cleavages in vivo yield mature proteins. GP-C polyprotein is cleaved in the endoplasmic reticulum by the host protease MBTPS1. Only cleaved glycoprotein is incorporated into virions.</text>
</comment>
<comment type="PTM">
    <molecule>Stable signal peptide</molecule>
    <text evidence="2">The SSP remains stably associated with the GP complex following cleavage by signal peptidase and plays crucial roles in the trafficking of GP through the secretory pathway.</text>
</comment>
<comment type="PTM">
    <molecule>Stable signal peptide</molecule>
    <text evidence="2">Myristoylation is necessary for GP2-mediated fusion activity.</text>
</comment>
<comment type="similarity">
    <text evidence="2">Belongs to the arenaviridae GPC protein family.</text>
</comment>
<organismHost>
    <name type="scientific">Homo sapiens</name>
    <name type="common">Human</name>
    <dbReference type="NCBI Taxonomy" id="9606"/>
</organismHost>
<reference key="1">
    <citation type="journal article" date="2008" name="PLoS Pathog.">
        <title>Chapare virus, a newly discovered arenavirus isolated from a fatal hemorrhagic fever case in Bolivia.</title>
        <authorList>
            <person name="Delgado S."/>
            <person name="Erickson B.R."/>
            <person name="Agudo R."/>
            <person name="Blair P.J."/>
            <person name="Vallejo E."/>
            <person name="Albarino C.G."/>
            <person name="Vargas J."/>
            <person name="Comer J.A."/>
            <person name="Rollin P.E."/>
            <person name="Ksiazek T.G."/>
            <person name="Olson J.G."/>
            <person name="Nichol S.T."/>
        </authorList>
    </citation>
    <scope>NUCLEOTIDE SEQUENCE [GENOMIC RNA]</scope>
</reference>
<accession>B2C4J0</accession>
<keyword id="KW-1015">Disulfide bond</keyword>
<keyword id="KW-1170">Fusion of virus membrane with host endosomal membrane</keyword>
<keyword id="KW-1168">Fusion of virus membrane with host membrane</keyword>
<keyword id="KW-0325">Glycoprotein</keyword>
<keyword id="KW-1032">Host cell membrane</keyword>
<keyword id="KW-1038">Host endoplasmic reticulum</keyword>
<keyword id="KW-1040">Host Golgi apparatus</keyword>
<keyword id="KW-1043">Host membrane</keyword>
<keyword id="KW-0945">Host-virus interaction</keyword>
<keyword id="KW-0449">Lipoprotein</keyword>
<keyword id="KW-0472">Membrane</keyword>
<keyword id="KW-0479">Metal-binding</keyword>
<keyword id="KW-0519">Myristate</keyword>
<keyword id="KW-0812">Transmembrane</keyword>
<keyword id="KW-1133">Transmembrane helix</keyword>
<keyword id="KW-1161">Viral attachment to host cell</keyword>
<keyword id="KW-0261">Viral envelope protein</keyword>
<keyword id="KW-1162">Viral penetration into host cytoplasm</keyword>
<keyword id="KW-0946">Virion</keyword>
<keyword id="KW-1164">Virus endocytosis by host</keyword>
<keyword id="KW-1160">Virus entry into host cell</keyword>
<keyword id="KW-0862">Zinc</keyword>
<sequence>MGQLVSFFQEIPNIIQEAINIALIAVSLIAILKGLVNLWKSGLFQLLVFLILAGRSCSFKIGRSTELQNITINMLKVFEDHPISCTVNKTLYYIRESENATWCVEIAALDMSVLLSPHDPRVMGNLSNCVHPDIKHRSELLGLLEWILRALKYDFLNYPPLLCEKVTSSVNETRIQINVSDSAGSHDFKETMLQRLAILFGTKLMFDKTPKQFIVIRNQTWVNQCKSNHVNTLHLMMANAGHAVKLRRLQGVFTWTITDAAGNDMPGGYCLERWMLVTSDLKCFGNTALAKCNLNHDSEFCDMLKLFEFNKKAIESLNDNTKNKVNLLTHSINALISDNLLMKNRLKELLDTPYCNYTKFWYVNHTITGEHSLPRCWMVKNNSYLNESEFRNDWILESDHLLSEMLNKEYFDRQGKTPITLVDICFWSTLFFTTTLFLHLVGFPTHRHIQGEPCPLPHKLNSNGGCRCGRYPELKKPTTWHRKH</sequence>
<gene>
    <name evidence="2" type="primary">GPC</name>
    <name type="synonym">GP-C</name>
</gene>
<name>GLYC_CHAVB</name>